<organism>
    <name type="scientific">Thermus thermophilus (strain ATCC 27634 / DSM 579 / HB8)</name>
    <dbReference type="NCBI Taxonomy" id="300852"/>
    <lineage>
        <taxon>Bacteria</taxon>
        <taxon>Thermotogati</taxon>
        <taxon>Deinococcota</taxon>
        <taxon>Deinococci</taxon>
        <taxon>Thermales</taxon>
        <taxon>Thermaceae</taxon>
        <taxon>Thermus</taxon>
    </lineage>
</organism>
<comment type="function">
    <text evidence="1">Catalyzes the transfer of the amino group of L-glutamate to [LysW]-aminoadipate 6-semialdehyde, generating [LysW]-gamma-L-lysine.</text>
</comment>
<comment type="catalytic activity">
    <reaction evidence="1">
        <text>[amino-group carrier protein]-C-terminal-gamma-(L-lysyl)-L-glutamate + 2-oxoglutarate = [amino-group carrier protein]-C-terminal-N-(1-carboxy-5-oxopentan-1-yl)-L-glutamine + L-glutamate</text>
        <dbReference type="Rhea" id="RHEA:41952"/>
        <dbReference type="Rhea" id="RHEA-COMP:9714"/>
        <dbReference type="Rhea" id="RHEA-COMP:9715"/>
        <dbReference type="ChEBI" id="CHEBI:16810"/>
        <dbReference type="ChEBI" id="CHEBI:29985"/>
        <dbReference type="ChEBI" id="CHEBI:78501"/>
        <dbReference type="ChEBI" id="CHEBI:78526"/>
        <dbReference type="EC" id="2.6.1.118"/>
    </reaction>
</comment>
<comment type="cofactor">
    <cofactor evidence="1">
        <name>pyridoxal 5'-phosphate</name>
        <dbReference type="ChEBI" id="CHEBI:597326"/>
    </cofactor>
    <text evidence="1">Binds 1 pyridoxal phosphate per subunit.</text>
</comment>
<comment type="pathway">
    <text evidence="1">Amino-acid biosynthesis; L-lysine biosynthesis via AAA pathway; L-lysine from L-alpha-aminoadipate (Thermus route): step 4/5.</text>
</comment>
<comment type="subunit">
    <text evidence="1">Homodimer.</text>
</comment>
<comment type="subcellular location">
    <subcellularLocation>
        <location evidence="1">Cytoplasm</location>
    </subcellularLocation>
</comment>
<comment type="similarity">
    <text evidence="1">Belongs to the class-III pyridoxal-phosphate-dependent aminotransferase family. LysJ subfamily.</text>
</comment>
<sequence length="395" mass="43423">METRTLEDWRALLEAEKTLDSGVYNKHDLLIVRGQGARVWDAEGNEYIDCVGGYGVANLGHGNPEVVEAVKRQAETLMAMPQTLPTPMRGEFYRTLTAILPPELNRVFPVNSGTEANEAALKFARAHTGRKKFVAAMRGFSGRTMGSLSVTWEPKYREPFLPLVEPVEFIPYNDVEALKRAVDEETAAVILEPVQGEGGVRPATPEFLRAAREITQEKGALLILDEIQTGMGRTGKRFAFEHFGIVPDILTLAKALGGGVPLGAAVMREEVARSMPKGGHGTTFGGNPLAMAAGVAAIRYLERTRLWERAAELGPWFMEKLRAIPSPKIREVRGMGLMVGLELKEKAAPYIARLEKEHRVLALQAGPTVIRFLPPLVIEKEDLERVVEAVRAVLA</sequence>
<evidence type="ECO:0000255" key="1">
    <source>
        <dbReference type="HAMAP-Rule" id="MF_02084"/>
    </source>
</evidence>
<evidence type="ECO:0000269" key="2">
    <source ref="2"/>
</evidence>
<evidence type="ECO:0000305" key="3">
    <source ref="2"/>
</evidence>
<evidence type="ECO:0007829" key="4">
    <source>
        <dbReference type="PDB" id="1VEF"/>
    </source>
</evidence>
<proteinExistence type="evidence at protein level"/>
<reference key="1">
    <citation type="submission" date="2004-11" db="EMBL/GenBank/DDBJ databases">
        <title>Complete genome sequence of Thermus thermophilus HB8.</title>
        <authorList>
            <person name="Masui R."/>
            <person name="Kurokawa K."/>
            <person name="Nakagawa N."/>
            <person name="Tokunaga F."/>
            <person name="Koyama Y."/>
            <person name="Shibata T."/>
            <person name="Oshima T."/>
            <person name="Yokoyama S."/>
            <person name="Yasunaga T."/>
            <person name="Kuramitsu S."/>
        </authorList>
    </citation>
    <scope>NUCLEOTIDE SEQUENCE [LARGE SCALE GENOMIC DNA]</scope>
    <source>
        <strain>ATCC 27634 / DSM 579 / HB8</strain>
    </source>
</reference>
<reference key="2">
    <citation type="submission" date="2005-08" db="PDB data bank">
        <title>Three-dimensional structure of acetylornithine aminotransferase from Thermus thermophilus HB8.</title>
        <authorList>
            <consortium name="RIKEN structural genomics initiative (RSGI)"/>
        </authorList>
    </citation>
    <scope>X-RAY CRYSTALLOGRAPHY (1.35 ANGSTROMS) IN COMPLEXES WITH SUBSTRATE ANALOGS AND PLP</scope>
</reference>
<name>LYSJ_THET8</name>
<keyword id="KW-0002">3D-structure</keyword>
<keyword id="KW-0028">Amino-acid biosynthesis</keyword>
<keyword id="KW-0032">Aminotransferase</keyword>
<keyword id="KW-0963">Cytoplasm</keyword>
<keyword id="KW-0457">Lysine biosynthesis</keyword>
<keyword id="KW-0663">Pyridoxal phosphate</keyword>
<keyword id="KW-1185">Reference proteome</keyword>
<keyword id="KW-0808">Transferase</keyword>
<gene>
    <name evidence="1" type="primary">lysJ</name>
    <name type="ordered locus">TTHA1755</name>
</gene>
<protein>
    <recommendedName>
        <fullName evidence="1">[LysW]-aminoadipate semialdehyde transaminase</fullName>
        <ecNumber evidence="1">2.6.1.118</ecNumber>
    </recommendedName>
</protein>
<accession>Q5SHH5</accession>
<dbReference type="EC" id="2.6.1.118" evidence="1"/>
<dbReference type="EMBL" id="AP008226">
    <property type="protein sequence ID" value="BAD71578.1"/>
    <property type="molecule type" value="Genomic_DNA"/>
</dbReference>
<dbReference type="RefSeq" id="WP_011228893.1">
    <property type="nucleotide sequence ID" value="NC_006461.1"/>
</dbReference>
<dbReference type="RefSeq" id="YP_145021.1">
    <property type="nucleotide sequence ID" value="NC_006461.1"/>
</dbReference>
<dbReference type="PDB" id="1VEF">
    <property type="method" value="X-ray"/>
    <property type="resolution" value="1.35 A"/>
    <property type="chains" value="A/B=1-395"/>
</dbReference>
<dbReference type="PDB" id="1WKG">
    <property type="method" value="X-ray"/>
    <property type="resolution" value="2.25 A"/>
    <property type="chains" value="A/B=1-395"/>
</dbReference>
<dbReference type="PDB" id="1WKH">
    <property type="method" value="X-ray"/>
    <property type="resolution" value="2.25 A"/>
    <property type="chains" value="A/B=1-395"/>
</dbReference>
<dbReference type="PDBsum" id="1VEF"/>
<dbReference type="PDBsum" id="1WKG"/>
<dbReference type="PDBsum" id="1WKH"/>
<dbReference type="SMR" id="Q5SHH5"/>
<dbReference type="EnsemblBacteria" id="BAD71578">
    <property type="protein sequence ID" value="BAD71578"/>
    <property type="gene ID" value="BAD71578"/>
</dbReference>
<dbReference type="GeneID" id="3169449"/>
<dbReference type="KEGG" id="ttj:TTHA1755"/>
<dbReference type="PATRIC" id="fig|300852.9.peg.1726"/>
<dbReference type="eggNOG" id="COG4992">
    <property type="taxonomic scope" value="Bacteria"/>
</dbReference>
<dbReference type="HOGENOM" id="CLU_016922_10_0_0"/>
<dbReference type="PhylomeDB" id="Q5SHH5"/>
<dbReference type="UniPathway" id="UPA00033">
    <property type="reaction ID" value="UER00038"/>
</dbReference>
<dbReference type="EvolutionaryTrace" id="Q5SHH5"/>
<dbReference type="Proteomes" id="UP000000532">
    <property type="component" value="Chromosome"/>
</dbReference>
<dbReference type="GO" id="GO:0005737">
    <property type="term" value="C:cytoplasm"/>
    <property type="evidence" value="ECO:0007669"/>
    <property type="project" value="UniProtKB-SubCell"/>
</dbReference>
<dbReference type="GO" id="GO:0042802">
    <property type="term" value="F:identical protein binding"/>
    <property type="evidence" value="ECO:0007669"/>
    <property type="project" value="TreeGrafter"/>
</dbReference>
<dbReference type="GO" id="GO:0030170">
    <property type="term" value="F:pyridoxal phosphate binding"/>
    <property type="evidence" value="ECO:0007669"/>
    <property type="project" value="InterPro"/>
</dbReference>
<dbReference type="GO" id="GO:0008483">
    <property type="term" value="F:transaminase activity"/>
    <property type="evidence" value="ECO:0007669"/>
    <property type="project" value="UniProtKB-UniRule"/>
</dbReference>
<dbReference type="GO" id="GO:0006525">
    <property type="term" value="P:arginine metabolic process"/>
    <property type="evidence" value="ECO:0007669"/>
    <property type="project" value="InterPro"/>
</dbReference>
<dbReference type="GO" id="GO:0019878">
    <property type="term" value="P:lysine biosynthetic process via aminoadipic acid"/>
    <property type="evidence" value="ECO:0007669"/>
    <property type="project" value="UniProtKB-UniRule"/>
</dbReference>
<dbReference type="CDD" id="cd00610">
    <property type="entry name" value="OAT_like"/>
    <property type="match status" value="1"/>
</dbReference>
<dbReference type="FunFam" id="3.40.640.10:FF:000004">
    <property type="entry name" value="Acetylornithine aminotransferase"/>
    <property type="match status" value="1"/>
</dbReference>
<dbReference type="Gene3D" id="3.90.1150.10">
    <property type="entry name" value="Aspartate Aminotransferase, domain 1"/>
    <property type="match status" value="1"/>
</dbReference>
<dbReference type="Gene3D" id="3.40.640.10">
    <property type="entry name" value="Type I PLP-dependent aspartate aminotransferase-like (Major domain)"/>
    <property type="match status" value="1"/>
</dbReference>
<dbReference type="HAMAP" id="MF_02084">
    <property type="entry name" value="LysJ_aminotrans_3"/>
    <property type="match status" value="1"/>
</dbReference>
<dbReference type="InterPro" id="IPR004636">
    <property type="entry name" value="AcOrn/SuccOrn_fam"/>
</dbReference>
<dbReference type="InterPro" id="IPR005814">
    <property type="entry name" value="Aminotrans_3"/>
</dbReference>
<dbReference type="InterPro" id="IPR049704">
    <property type="entry name" value="Aminotrans_3_PPA_site"/>
</dbReference>
<dbReference type="InterPro" id="IPR050103">
    <property type="entry name" value="Class-III_PLP-dep_AT"/>
</dbReference>
<dbReference type="InterPro" id="IPR053513">
    <property type="entry name" value="Class-III_PLP_Aminotransferase"/>
</dbReference>
<dbReference type="InterPro" id="IPR037537">
    <property type="entry name" value="LysJ"/>
</dbReference>
<dbReference type="InterPro" id="IPR015424">
    <property type="entry name" value="PyrdxlP-dep_Trfase"/>
</dbReference>
<dbReference type="InterPro" id="IPR015421">
    <property type="entry name" value="PyrdxlP-dep_Trfase_major"/>
</dbReference>
<dbReference type="InterPro" id="IPR015422">
    <property type="entry name" value="PyrdxlP-dep_Trfase_small"/>
</dbReference>
<dbReference type="NCBIfam" id="TIGR00707">
    <property type="entry name" value="argD"/>
    <property type="match status" value="1"/>
</dbReference>
<dbReference type="NCBIfam" id="NF042418">
    <property type="entry name" value="LysJ_Th_th"/>
    <property type="match status" value="1"/>
</dbReference>
<dbReference type="PANTHER" id="PTHR11986:SF79">
    <property type="entry name" value="ACETYLORNITHINE AMINOTRANSFERASE, MITOCHONDRIAL"/>
    <property type="match status" value="1"/>
</dbReference>
<dbReference type="PANTHER" id="PTHR11986">
    <property type="entry name" value="AMINOTRANSFERASE CLASS III"/>
    <property type="match status" value="1"/>
</dbReference>
<dbReference type="Pfam" id="PF00202">
    <property type="entry name" value="Aminotran_3"/>
    <property type="match status" value="1"/>
</dbReference>
<dbReference type="PIRSF" id="PIRSF000521">
    <property type="entry name" value="Transaminase_4ab_Lys_Orn"/>
    <property type="match status" value="1"/>
</dbReference>
<dbReference type="SUPFAM" id="SSF53383">
    <property type="entry name" value="PLP-dependent transferases"/>
    <property type="match status" value="1"/>
</dbReference>
<dbReference type="PROSITE" id="PS00600">
    <property type="entry name" value="AA_TRANSFER_CLASS_3"/>
    <property type="match status" value="1"/>
</dbReference>
<feature type="chain" id="PRO_0000311262" description="[LysW]-aminoadipate semialdehyde transaminase">
    <location>
        <begin position="1"/>
        <end position="395"/>
    </location>
</feature>
<feature type="binding site" evidence="1 2">
    <location>
        <begin position="113"/>
        <end position="114"/>
    </location>
    <ligand>
        <name>pyridoxal 5'-phosphate</name>
        <dbReference type="ChEBI" id="CHEBI:597326"/>
    </ligand>
</feature>
<feature type="binding site" evidence="1 3">
    <location>
        <position position="140"/>
    </location>
    <ligand>
        <name>pyridoxal 5'-phosphate</name>
        <dbReference type="ChEBI" id="CHEBI:597326"/>
    </ligand>
</feature>
<feature type="binding site" evidence="1 3">
    <location>
        <position position="143"/>
    </location>
    <ligand>
        <name>substrate</name>
    </ligand>
</feature>
<feature type="binding site" evidence="1 3">
    <location>
        <begin position="225"/>
        <end position="228"/>
    </location>
    <ligand>
        <name>pyridoxal 5'-phosphate</name>
        <dbReference type="ChEBI" id="CHEBI:597326"/>
    </ligand>
</feature>
<feature type="binding site" evidence="1 3">
    <location>
        <position position="282"/>
    </location>
    <ligand>
        <name>substrate</name>
    </ligand>
</feature>
<feature type="binding site" evidence="1 2">
    <location>
        <position position="283"/>
    </location>
    <ligand>
        <name>pyridoxal 5'-phosphate</name>
        <dbReference type="ChEBI" id="CHEBI:597326"/>
    </ligand>
</feature>
<feature type="modified residue" description="N6-(pyridoxal phosphate)lysine" evidence="1 2">
    <location>
        <position position="254"/>
    </location>
</feature>
<feature type="helix" evidence="4">
    <location>
        <begin position="10"/>
        <end position="19"/>
    </location>
</feature>
<feature type="strand" evidence="4">
    <location>
        <begin position="31"/>
        <end position="36"/>
    </location>
</feature>
<feature type="strand" evidence="4">
    <location>
        <begin position="38"/>
        <end position="41"/>
    </location>
</feature>
<feature type="strand" evidence="4">
    <location>
        <begin position="46"/>
        <end position="51"/>
    </location>
</feature>
<feature type="helix" evidence="4">
    <location>
        <begin position="52"/>
        <end position="55"/>
    </location>
</feature>
<feature type="helix" evidence="4">
    <location>
        <begin position="64"/>
        <end position="76"/>
    </location>
</feature>
<feature type="helix" evidence="4">
    <location>
        <begin position="87"/>
        <end position="98"/>
    </location>
</feature>
<feature type="strand" evidence="4">
    <location>
        <begin position="104"/>
        <end position="112"/>
    </location>
</feature>
<feature type="helix" evidence="4">
    <location>
        <begin position="113"/>
        <end position="128"/>
    </location>
</feature>
<feature type="strand" evidence="4">
    <location>
        <begin position="132"/>
        <end position="136"/>
    </location>
</feature>
<feature type="helix" evidence="4">
    <location>
        <begin position="145"/>
        <end position="149"/>
    </location>
</feature>
<feature type="helix" evidence="4">
    <location>
        <begin position="154"/>
        <end position="157"/>
    </location>
</feature>
<feature type="helix" evidence="4">
    <location>
        <begin position="158"/>
        <end position="160"/>
    </location>
</feature>
<feature type="strand" evidence="4">
    <location>
        <begin position="167"/>
        <end position="170"/>
    </location>
</feature>
<feature type="helix" evidence="4">
    <location>
        <begin position="175"/>
        <end position="181"/>
    </location>
</feature>
<feature type="strand" evidence="4">
    <location>
        <begin position="186"/>
        <end position="191"/>
    </location>
</feature>
<feature type="strand" evidence="4">
    <location>
        <begin position="193"/>
        <end position="195"/>
    </location>
</feature>
<feature type="turn" evidence="4">
    <location>
        <begin position="196"/>
        <end position="199"/>
    </location>
</feature>
<feature type="strand" evidence="4">
    <location>
        <begin position="200"/>
        <end position="202"/>
    </location>
</feature>
<feature type="helix" evidence="4">
    <location>
        <begin position="205"/>
        <end position="218"/>
    </location>
</feature>
<feature type="strand" evidence="4">
    <location>
        <begin position="221"/>
        <end position="225"/>
    </location>
</feature>
<feature type="turn" evidence="4">
    <location>
        <begin position="227"/>
        <end position="234"/>
    </location>
</feature>
<feature type="strand" evidence="4">
    <location>
        <begin position="235"/>
        <end position="238"/>
    </location>
</feature>
<feature type="helix" evidence="4">
    <location>
        <begin position="240"/>
        <end position="243"/>
    </location>
</feature>
<feature type="strand" evidence="4">
    <location>
        <begin position="248"/>
        <end position="252"/>
    </location>
</feature>
<feature type="helix" evidence="4">
    <location>
        <begin position="254"/>
        <end position="257"/>
    </location>
</feature>
<feature type="strand" evidence="4">
    <location>
        <begin position="263"/>
        <end position="268"/>
    </location>
</feature>
<feature type="helix" evidence="4">
    <location>
        <begin position="269"/>
        <end position="273"/>
    </location>
</feature>
<feature type="helix" evidence="4">
    <location>
        <begin position="288"/>
        <end position="304"/>
    </location>
</feature>
<feature type="helix" evidence="4">
    <location>
        <begin position="307"/>
        <end position="322"/>
    </location>
</feature>
<feature type="strand" evidence="4">
    <location>
        <begin position="329"/>
        <end position="335"/>
    </location>
</feature>
<feature type="strand" evidence="4">
    <location>
        <begin position="338"/>
        <end position="345"/>
    </location>
</feature>
<feature type="helix" evidence="4">
    <location>
        <begin position="348"/>
        <end position="358"/>
    </location>
</feature>
<feature type="strand" evidence="4">
    <location>
        <begin position="363"/>
        <end position="366"/>
    </location>
</feature>
<feature type="strand" evidence="4">
    <location>
        <begin position="369"/>
        <end position="372"/>
    </location>
</feature>
<feature type="helix" evidence="4">
    <location>
        <begin position="380"/>
        <end position="394"/>
    </location>
</feature>